<comment type="function">
    <text evidence="2 4">Catalyzes the dehydration of the S-form of NAD(P)HX at the expense of ATP, which is converted to ADP. Together with NAD(P)HX epimerase, which catalyzes the epimerization of the S- and R-forms, the enzyme allows the repair of both epimers of NAD(P)HX, a damaged form of NAD(P)H that is a result of enzymatic or heat-dependent hydration.</text>
</comment>
<comment type="catalytic activity">
    <reaction evidence="2 4">
        <text>(6S)-NADHX + ATP = ADP + phosphate + NADH + H(+)</text>
        <dbReference type="Rhea" id="RHEA:19017"/>
        <dbReference type="ChEBI" id="CHEBI:15378"/>
        <dbReference type="ChEBI" id="CHEBI:30616"/>
        <dbReference type="ChEBI" id="CHEBI:43474"/>
        <dbReference type="ChEBI" id="CHEBI:57945"/>
        <dbReference type="ChEBI" id="CHEBI:64074"/>
        <dbReference type="ChEBI" id="CHEBI:456216"/>
        <dbReference type="EC" id="4.2.1.93"/>
    </reaction>
</comment>
<comment type="catalytic activity">
    <reaction evidence="4">
        <text>(6S)-NADPHX + ATP = ADP + phosphate + NADPH + H(+)</text>
        <dbReference type="Rhea" id="RHEA:32231"/>
        <dbReference type="ChEBI" id="CHEBI:15378"/>
        <dbReference type="ChEBI" id="CHEBI:30616"/>
        <dbReference type="ChEBI" id="CHEBI:43474"/>
        <dbReference type="ChEBI" id="CHEBI:57783"/>
        <dbReference type="ChEBI" id="CHEBI:64076"/>
        <dbReference type="ChEBI" id="CHEBI:456216"/>
        <dbReference type="EC" id="4.2.1.93"/>
    </reaction>
</comment>
<comment type="cofactor">
    <cofactor evidence="2">
        <name>Mg(2+)</name>
        <dbReference type="ChEBI" id="CHEBI:18420"/>
    </cofactor>
</comment>
<comment type="biophysicochemical properties">
    <kinetics>
        <KM evidence="4">2.8 uM for (S)-NADHX</KM>
        <KM evidence="4">2.5 uM for (S)-NADPHX</KM>
        <KM evidence="4">1.8 uM for ATP</KM>
        <Vmax evidence="4">0.43 umol/min/mg enzyme toward (S)-NADHX</Vmax>
        <Vmax evidence="4">1.6 umol/min/mg enzyme toward (S)-NADPHX</Vmax>
        <Vmax evidence="4">0.26 umol/min/mg enzyme toward ATP</Vmax>
    </kinetics>
</comment>
<comment type="subcellular location">
    <subcellularLocation>
        <location evidence="2 3">Mitochondrion</location>
    </subcellularLocation>
</comment>
<comment type="alternative products">
    <event type="alternative splicing"/>
    <isoform>
        <id>Q9CZ42-1</id>
        <name>1</name>
        <sequence type="displayed"/>
    </isoform>
    <isoform>
        <id>Q9CZ42-2</id>
        <name>2</name>
        <sequence type="described" ref="VSP_033831"/>
    </isoform>
    <isoform>
        <id>Q9CZ42-3</id>
        <name>3</name>
        <sequence type="described" ref="VSP_033832"/>
    </isoform>
</comment>
<comment type="similarity">
    <text evidence="2">Belongs to the NnrD/CARKD family.</text>
</comment>
<reference key="1">
    <citation type="journal article" date="2005" name="Science">
        <title>The transcriptional landscape of the mammalian genome.</title>
        <authorList>
            <person name="Carninci P."/>
            <person name="Kasukawa T."/>
            <person name="Katayama S."/>
            <person name="Gough J."/>
            <person name="Frith M.C."/>
            <person name="Maeda N."/>
            <person name="Oyama R."/>
            <person name="Ravasi T."/>
            <person name="Lenhard B."/>
            <person name="Wells C."/>
            <person name="Kodzius R."/>
            <person name="Shimokawa K."/>
            <person name="Bajic V.B."/>
            <person name="Brenner S.E."/>
            <person name="Batalov S."/>
            <person name="Forrest A.R."/>
            <person name="Zavolan M."/>
            <person name="Davis M.J."/>
            <person name="Wilming L.G."/>
            <person name="Aidinis V."/>
            <person name="Allen J.E."/>
            <person name="Ambesi-Impiombato A."/>
            <person name="Apweiler R."/>
            <person name="Aturaliya R.N."/>
            <person name="Bailey T.L."/>
            <person name="Bansal M."/>
            <person name="Baxter L."/>
            <person name="Beisel K.W."/>
            <person name="Bersano T."/>
            <person name="Bono H."/>
            <person name="Chalk A.M."/>
            <person name="Chiu K.P."/>
            <person name="Choudhary V."/>
            <person name="Christoffels A."/>
            <person name="Clutterbuck D.R."/>
            <person name="Crowe M.L."/>
            <person name="Dalla E."/>
            <person name="Dalrymple B.P."/>
            <person name="de Bono B."/>
            <person name="Della Gatta G."/>
            <person name="di Bernardo D."/>
            <person name="Down T."/>
            <person name="Engstrom P."/>
            <person name="Fagiolini M."/>
            <person name="Faulkner G."/>
            <person name="Fletcher C.F."/>
            <person name="Fukushima T."/>
            <person name="Furuno M."/>
            <person name="Futaki S."/>
            <person name="Gariboldi M."/>
            <person name="Georgii-Hemming P."/>
            <person name="Gingeras T.R."/>
            <person name="Gojobori T."/>
            <person name="Green R.E."/>
            <person name="Gustincich S."/>
            <person name="Harbers M."/>
            <person name="Hayashi Y."/>
            <person name="Hensch T.K."/>
            <person name="Hirokawa N."/>
            <person name="Hill D."/>
            <person name="Huminiecki L."/>
            <person name="Iacono M."/>
            <person name="Ikeo K."/>
            <person name="Iwama A."/>
            <person name="Ishikawa T."/>
            <person name="Jakt M."/>
            <person name="Kanapin A."/>
            <person name="Katoh M."/>
            <person name="Kawasawa Y."/>
            <person name="Kelso J."/>
            <person name="Kitamura H."/>
            <person name="Kitano H."/>
            <person name="Kollias G."/>
            <person name="Krishnan S.P."/>
            <person name="Kruger A."/>
            <person name="Kummerfeld S.K."/>
            <person name="Kurochkin I.V."/>
            <person name="Lareau L.F."/>
            <person name="Lazarevic D."/>
            <person name="Lipovich L."/>
            <person name="Liu J."/>
            <person name="Liuni S."/>
            <person name="McWilliam S."/>
            <person name="Madan Babu M."/>
            <person name="Madera M."/>
            <person name="Marchionni L."/>
            <person name="Matsuda H."/>
            <person name="Matsuzawa S."/>
            <person name="Miki H."/>
            <person name="Mignone F."/>
            <person name="Miyake S."/>
            <person name="Morris K."/>
            <person name="Mottagui-Tabar S."/>
            <person name="Mulder N."/>
            <person name="Nakano N."/>
            <person name="Nakauchi H."/>
            <person name="Ng P."/>
            <person name="Nilsson R."/>
            <person name="Nishiguchi S."/>
            <person name="Nishikawa S."/>
            <person name="Nori F."/>
            <person name="Ohara O."/>
            <person name="Okazaki Y."/>
            <person name="Orlando V."/>
            <person name="Pang K.C."/>
            <person name="Pavan W.J."/>
            <person name="Pavesi G."/>
            <person name="Pesole G."/>
            <person name="Petrovsky N."/>
            <person name="Piazza S."/>
            <person name="Reed J."/>
            <person name="Reid J.F."/>
            <person name="Ring B.Z."/>
            <person name="Ringwald M."/>
            <person name="Rost B."/>
            <person name="Ruan Y."/>
            <person name="Salzberg S.L."/>
            <person name="Sandelin A."/>
            <person name="Schneider C."/>
            <person name="Schoenbach C."/>
            <person name="Sekiguchi K."/>
            <person name="Semple C.A."/>
            <person name="Seno S."/>
            <person name="Sessa L."/>
            <person name="Sheng Y."/>
            <person name="Shibata Y."/>
            <person name="Shimada H."/>
            <person name="Shimada K."/>
            <person name="Silva D."/>
            <person name="Sinclair B."/>
            <person name="Sperling S."/>
            <person name="Stupka E."/>
            <person name="Sugiura K."/>
            <person name="Sultana R."/>
            <person name="Takenaka Y."/>
            <person name="Taki K."/>
            <person name="Tammoja K."/>
            <person name="Tan S.L."/>
            <person name="Tang S."/>
            <person name="Taylor M.S."/>
            <person name="Tegner J."/>
            <person name="Teichmann S.A."/>
            <person name="Ueda H.R."/>
            <person name="van Nimwegen E."/>
            <person name="Verardo R."/>
            <person name="Wei C.L."/>
            <person name="Yagi K."/>
            <person name="Yamanishi H."/>
            <person name="Zabarovsky E."/>
            <person name="Zhu S."/>
            <person name="Zimmer A."/>
            <person name="Hide W."/>
            <person name="Bult C."/>
            <person name="Grimmond S.M."/>
            <person name="Teasdale R.D."/>
            <person name="Liu E.T."/>
            <person name="Brusic V."/>
            <person name="Quackenbush J."/>
            <person name="Wahlestedt C."/>
            <person name="Mattick J.S."/>
            <person name="Hume D.A."/>
            <person name="Kai C."/>
            <person name="Sasaki D."/>
            <person name="Tomaru Y."/>
            <person name="Fukuda S."/>
            <person name="Kanamori-Katayama M."/>
            <person name="Suzuki M."/>
            <person name="Aoki J."/>
            <person name="Arakawa T."/>
            <person name="Iida J."/>
            <person name="Imamura K."/>
            <person name="Itoh M."/>
            <person name="Kato T."/>
            <person name="Kawaji H."/>
            <person name="Kawagashira N."/>
            <person name="Kawashima T."/>
            <person name="Kojima M."/>
            <person name="Kondo S."/>
            <person name="Konno H."/>
            <person name="Nakano K."/>
            <person name="Ninomiya N."/>
            <person name="Nishio T."/>
            <person name="Okada M."/>
            <person name="Plessy C."/>
            <person name="Shibata K."/>
            <person name="Shiraki T."/>
            <person name="Suzuki S."/>
            <person name="Tagami M."/>
            <person name="Waki K."/>
            <person name="Watahiki A."/>
            <person name="Okamura-Oho Y."/>
            <person name="Suzuki H."/>
            <person name="Kawai J."/>
            <person name="Hayashizaki Y."/>
        </authorList>
    </citation>
    <scope>NUCLEOTIDE SEQUENCE [LARGE SCALE MRNA] (ISOFORMS 1; 2 AND 3)</scope>
    <source>
        <strain>C57BL/6J</strain>
        <strain>NOD</strain>
        <tissue>Brain</tissue>
        <tissue>Tongue</tissue>
    </source>
</reference>
<reference key="2">
    <citation type="journal article" date="2004" name="Genome Res.">
        <title>The status, quality, and expansion of the NIH full-length cDNA project: the Mammalian Gene Collection (MGC).</title>
        <authorList>
            <consortium name="The MGC Project Team"/>
        </authorList>
    </citation>
    <scope>NUCLEOTIDE SEQUENCE [LARGE SCALE MRNA] (ISOFORMS 1 AND 2)</scope>
    <source>
        <strain>FVB/N</strain>
        <tissue>Liver</tissue>
    </source>
</reference>
<reference key="3">
    <citation type="journal article" date="2007" name="J. Immunol.">
        <title>Quantitative time-resolved phosphoproteomic analysis of mast cell signaling.</title>
        <authorList>
            <person name="Cao L."/>
            <person name="Yu K."/>
            <person name="Banh C."/>
            <person name="Nguyen V."/>
            <person name="Ritz A."/>
            <person name="Raphael B.J."/>
            <person name="Kawakami Y."/>
            <person name="Kawakami T."/>
            <person name="Salomon A.R."/>
        </authorList>
    </citation>
    <scope>PHOSPHORYLATION [LARGE SCALE ANALYSIS] AT TYR-81</scope>
    <scope>IDENTIFICATION BY MASS SPECTROMETRY [LARGE SCALE ANALYSIS]</scope>
    <source>
        <tissue>Mast cell</tissue>
    </source>
</reference>
<reference key="4">
    <citation type="journal article" date="2008" name="Cell">
        <title>A mitochondrial protein compendium elucidates complex I disease biology.</title>
        <authorList>
            <person name="Pagliarini D.J."/>
            <person name="Calvo S.E."/>
            <person name="Chang B."/>
            <person name="Sheth S.A."/>
            <person name="Vafai S.B."/>
            <person name="Ong S.E."/>
            <person name="Walford G.A."/>
            <person name="Sugiana C."/>
            <person name="Boneh A."/>
            <person name="Chen W.K."/>
            <person name="Hill D.E."/>
            <person name="Vidal M."/>
            <person name="Evans J.G."/>
            <person name="Thorburn D.R."/>
            <person name="Carr S.A."/>
            <person name="Mootha V.K."/>
        </authorList>
    </citation>
    <scope>SUBCELLULAR LOCATION [LARGE SCALE ANALYSIS]</scope>
</reference>
<reference key="5">
    <citation type="journal article" date="2008" name="J. Proteome Res.">
        <title>Large-scale identification and evolution indexing of tyrosine phosphorylation sites from murine brain.</title>
        <authorList>
            <person name="Ballif B.A."/>
            <person name="Carey G.R."/>
            <person name="Sunyaev S.R."/>
            <person name="Gygi S.P."/>
        </authorList>
    </citation>
    <scope>PHOSPHORYLATION [LARGE SCALE ANALYSIS] AT TYR-81</scope>
    <scope>IDENTIFICATION BY MASS SPECTROMETRY [LARGE SCALE ANALYSIS]</scope>
    <source>
        <tissue>Brain</tissue>
    </source>
</reference>
<reference key="6">
    <citation type="journal article" date="2010" name="Cell">
        <title>A tissue-specific atlas of mouse protein phosphorylation and expression.</title>
        <authorList>
            <person name="Huttlin E.L."/>
            <person name="Jedrychowski M.P."/>
            <person name="Elias J.E."/>
            <person name="Goswami T."/>
            <person name="Rad R."/>
            <person name="Beausoleil S.A."/>
            <person name="Villen J."/>
            <person name="Haas W."/>
            <person name="Sowa M.E."/>
            <person name="Gygi S.P."/>
        </authorList>
    </citation>
    <scope>PHOSPHORYLATION [LARGE SCALE ANALYSIS] AT SER-216</scope>
    <scope>IDENTIFICATION BY MASS SPECTROMETRY [LARGE SCALE ANALYSIS]</scope>
    <source>
        <tissue>Brain</tissue>
        <tissue>Brown adipose tissue</tissue>
        <tissue>Heart</tissue>
        <tissue>Kidney</tissue>
        <tissue>Liver</tissue>
        <tissue>Lung</tissue>
        <tissue>Pancreas</tissue>
        <tissue>Spleen</tissue>
        <tissue>Testis</tissue>
    </source>
</reference>
<reference key="7">
    <citation type="journal article" date="2011" name="J. Biol. Chem.">
        <title>Extremely conserved ATP- or ADP-dependent enzymatic system for nicotinamide nucleotide repair.</title>
        <authorList>
            <person name="Marbaix A.Y."/>
            <person name="Noel G."/>
            <person name="Detroux A.M."/>
            <person name="Vertommen D."/>
            <person name="Van Schaftingen E."/>
            <person name="Linster C.L."/>
        </authorList>
    </citation>
    <scope>FUNCTION</scope>
    <scope>CATALYTIC ACTIVITY</scope>
    <scope>BIOPHYSICOCHEMICAL PROPERTIES</scope>
</reference>
<reference key="8">
    <citation type="journal article" date="2013" name="Proc. Natl. Acad. Sci. U.S.A.">
        <title>Label-free quantitative proteomics of the lysine acetylome in mitochondria identifies substrates of SIRT3 in metabolic pathways.</title>
        <authorList>
            <person name="Rardin M.J."/>
            <person name="Newman J.C."/>
            <person name="Held J.M."/>
            <person name="Cusack M.P."/>
            <person name="Sorensen D.J."/>
            <person name="Li B."/>
            <person name="Schilling B."/>
            <person name="Mooney S.D."/>
            <person name="Kahn C.R."/>
            <person name="Verdin E."/>
            <person name="Gibson B.W."/>
        </authorList>
    </citation>
    <scope>ACETYLATION [LARGE SCALE ANALYSIS] AT LYS-63</scope>
    <scope>IDENTIFICATION BY MASS SPECTROMETRY [LARGE SCALE ANALYSIS]</scope>
    <source>
        <tissue>Liver</tissue>
    </source>
</reference>
<sequence>MAVHACGAAAAVVALLSAAIALQWSPLYAVLQRALSLHTAHATKDMENLFQLVRNIVPALTSKKHKGQDGRIGIVGGCQEYTGAPYFAGISALKVGADLTHVFCAREAAPVIKSYSPELIVHPVLDSSNAVEEVEKWLPRLHALVVGPGLGRDDLLLNNVRGILESTKARDIPVVIDADGLWLVAQQPALIHSYHKAILTPNHVEFSRLWEAVLSSPMDSNDLKGSTLKLSQALGNITVVQKGEQDLISNGQQVLVCNQEGSSRRCGGQGDLLSGSLGVMVHWALRAGPEKTNGSSPLLVAAWGACTLTRECNRQAFQKYGRSTTTTDMITEVGTAFSRLFTT</sequence>
<proteinExistence type="evidence at protein level"/>
<protein>
    <recommendedName>
        <fullName evidence="2">ATP-dependent (S)-NAD(P)H-hydrate dehydratase</fullName>
        <ecNumber evidence="2 4">4.2.1.93</ecNumber>
    </recommendedName>
    <alternativeName>
        <fullName evidence="2">ATP-dependent NAD(P)HX dehydratase</fullName>
    </alternativeName>
    <alternativeName>
        <fullName evidence="2">Carbohydrate kinase domain-containing protein</fullName>
    </alternativeName>
    <alternativeName>
        <fullName evidence="1">NAD(P)HX dehydratase</fullName>
    </alternativeName>
</protein>
<organism>
    <name type="scientific">Mus musculus</name>
    <name type="common">Mouse</name>
    <dbReference type="NCBI Taxonomy" id="10090"/>
    <lineage>
        <taxon>Eukaryota</taxon>
        <taxon>Metazoa</taxon>
        <taxon>Chordata</taxon>
        <taxon>Craniata</taxon>
        <taxon>Vertebrata</taxon>
        <taxon>Euteleostomi</taxon>
        <taxon>Mammalia</taxon>
        <taxon>Eutheria</taxon>
        <taxon>Euarchontoglires</taxon>
        <taxon>Glires</taxon>
        <taxon>Rodentia</taxon>
        <taxon>Myomorpha</taxon>
        <taxon>Muroidea</taxon>
        <taxon>Muridae</taxon>
        <taxon>Murinae</taxon>
        <taxon>Mus</taxon>
        <taxon>Mus</taxon>
    </lineage>
</organism>
<keyword id="KW-0007">Acetylation</keyword>
<keyword id="KW-0025">Alternative splicing</keyword>
<keyword id="KW-0067">ATP-binding</keyword>
<keyword id="KW-0456">Lyase</keyword>
<keyword id="KW-0496">Mitochondrion</keyword>
<keyword id="KW-0520">NAD</keyword>
<keyword id="KW-0521">NADP</keyword>
<keyword id="KW-0547">Nucleotide-binding</keyword>
<keyword id="KW-0597">Phosphoprotein</keyword>
<keyword id="KW-1185">Reference proteome</keyword>
<keyword id="KW-0809">Transit peptide</keyword>
<evidence type="ECO:0000250" key="1">
    <source>
        <dbReference type="UniProtKB" id="Q8IW45"/>
    </source>
</evidence>
<evidence type="ECO:0000255" key="2">
    <source>
        <dbReference type="HAMAP-Rule" id="MF_03157"/>
    </source>
</evidence>
<evidence type="ECO:0000269" key="3">
    <source>
    </source>
</evidence>
<evidence type="ECO:0000269" key="4">
    <source>
    </source>
</evidence>
<evidence type="ECO:0000303" key="5">
    <source>
    </source>
</evidence>
<evidence type="ECO:0000303" key="6">
    <source>
    </source>
</evidence>
<evidence type="ECO:0000305" key="7"/>
<evidence type="ECO:0007744" key="8">
    <source>
    </source>
</evidence>
<evidence type="ECO:0007744" key="9">
    <source>
    </source>
</evidence>
<evidence type="ECO:0007744" key="10">
    <source>
    </source>
</evidence>
<evidence type="ECO:0007744" key="11">
    <source>
    </source>
</evidence>
<accession>Q9CZ42</accession>
<accession>Q9CQX9</accession>
<accession>Q9D7G7</accession>
<accession>Q9DC93</accession>
<feature type="transit peptide" description="Mitochondrion" evidence="2">
    <location>
        <begin position="1"/>
        <end position="42"/>
    </location>
</feature>
<feature type="chain" id="PRO_0000337022" description="ATP-dependent (S)-NAD(P)H-hydrate dehydratase">
    <location>
        <begin position="43"/>
        <end position="343"/>
    </location>
</feature>
<feature type="domain" description="YjeF C-terminal" evidence="2">
    <location>
        <begin position="49"/>
        <end position="340"/>
    </location>
</feature>
<feature type="binding site" evidence="2">
    <location>
        <position position="149"/>
    </location>
    <ligand>
        <name>(6S)-NADPHX</name>
        <dbReference type="ChEBI" id="CHEBI:64076"/>
    </ligand>
</feature>
<feature type="binding site" evidence="2">
    <location>
        <begin position="202"/>
        <end position="208"/>
    </location>
    <ligand>
        <name>(6S)-NADPHX</name>
        <dbReference type="ChEBI" id="CHEBI:64076"/>
    </ligand>
</feature>
<feature type="binding site" evidence="2">
    <location>
        <begin position="242"/>
        <end position="246"/>
    </location>
    <ligand>
        <name>ATP</name>
        <dbReference type="ChEBI" id="CHEBI:30616"/>
    </ligand>
</feature>
<feature type="binding site" evidence="2">
    <location>
        <begin position="261"/>
        <end position="270"/>
    </location>
    <ligand>
        <name>ATP</name>
        <dbReference type="ChEBI" id="CHEBI:30616"/>
    </ligand>
</feature>
<feature type="binding site" evidence="2">
    <location>
        <position position="271"/>
    </location>
    <ligand>
        <name>(6S)-NADPHX</name>
        <dbReference type="ChEBI" id="CHEBI:64076"/>
    </ligand>
</feature>
<feature type="modified residue" description="N6-acetyllysine" evidence="11">
    <location>
        <position position="63"/>
    </location>
</feature>
<feature type="modified residue" description="Phosphotyrosine" evidence="8 9">
    <location>
        <position position="81"/>
    </location>
</feature>
<feature type="modified residue" description="Phosphoserine" evidence="10">
    <location>
        <position position="216"/>
    </location>
</feature>
<feature type="splice variant" id="VSP_033831" description="In isoform 2." evidence="5 6">
    <location>
        <begin position="1"/>
        <end position="45"/>
    </location>
</feature>
<feature type="splice variant" id="VSP_033832" description="In isoform 3." evidence="6">
    <original>MAVHACGAAAAVVALLSAAIALQWSPLYA</original>
    <variation>MGFRCVAIRACGG</variation>
    <location>
        <begin position="1"/>
        <end position="29"/>
    </location>
</feature>
<feature type="sequence conflict" description="In Ref. 1; BAB22531." evidence="7" ref="1">
    <original>H</original>
    <variation>N</variation>
    <location>
        <position position="203"/>
    </location>
</feature>
<name>NNRD_MOUSE</name>
<dbReference type="EC" id="4.2.1.93" evidence="2 4"/>
<dbReference type="EMBL" id="AK003048">
    <property type="protein sequence ID" value="BAB22531.1"/>
    <property type="molecule type" value="mRNA"/>
</dbReference>
<dbReference type="EMBL" id="AK009254">
    <property type="protein sequence ID" value="BAB26172.1"/>
    <property type="molecule type" value="mRNA"/>
</dbReference>
<dbReference type="EMBL" id="AK012456">
    <property type="protein sequence ID" value="BAB28251.1"/>
    <property type="molecule type" value="mRNA"/>
</dbReference>
<dbReference type="EMBL" id="AK013028">
    <property type="protein sequence ID" value="BAB28607.1"/>
    <property type="molecule type" value="mRNA"/>
</dbReference>
<dbReference type="EMBL" id="AK013069">
    <property type="protein sequence ID" value="BAB28632.1"/>
    <property type="molecule type" value="mRNA"/>
</dbReference>
<dbReference type="EMBL" id="AK013420">
    <property type="protein sequence ID" value="BAB28847.1"/>
    <property type="molecule type" value="mRNA"/>
</dbReference>
<dbReference type="EMBL" id="AK154142">
    <property type="protein sequence ID" value="BAE32403.1"/>
    <property type="molecule type" value="mRNA"/>
</dbReference>
<dbReference type="EMBL" id="AK171034">
    <property type="protein sequence ID" value="BAE42200.1"/>
    <property type="molecule type" value="mRNA"/>
</dbReference>
<dbReference type="EMBL" id="BC019538">
    <property type="protein sequence ID" value="AAH19538.1"/>
    <property type="molecule type" value="mRNA"/>
</dbReference>
<dbReference type="EMBL" id="BC021955">
    <property type="protein sequence ID" value="AAH21955.1"/>
    <property type="molecule type" value="mRNA"/>
</dbReference>
<dbReference type="CCDS" id="CCDS57604.1">
    <molecule id="Q9CZ42-3"/>
</dbReference>
<dbReference type="RefSeq" id="NP_001177286.1">
    <property type="nucleotide sequence ID" value="NM_001190357.1"/>
</dbReference>
<dbReference type="RefSeq" id="NP_081271.2">
    <property type="nucleotide sequence ID" value="NM_026995.4"/>
</dbReference>
<dbReference type="SMR" id="Q9CZ42"/>
<dbReference type="BioGRID" id="213302">
    <property type="interactions" value="8"/>
</dbReference>
<dbReference type="FunCoup" id="Q9CZ42">
    <property type="interactions" value="1190"/>
</dbReference>
<dbReference type="IntAct" id="Q9CZ42">
    <property type="interactions" value="1"/>
</dbReference>
<dbReference type="MINT" id="Q9CZ42"/>
<dbReference type="STRING" id="10090.ENSMUSP00000033901"/>
<dbReference type="GlyConnect" id="2143">
    <property type="glycosylation" value="2 N-Linked glycans (1 site)"/>
</dbReference>
<dbReference type="GlyCosmos" id="Q9CZ42">
    <property type="glycosylation" value="1 site, 2 glycans"/>
</dbReference>
<dbReference type="GlyGen" id="Q9CZ42">
    <property type="glycosylation" value="2 sites, 3 N-linked glycans (1 site), 1 O-linked glycan (1 site)"/>
</dbReference>
<dbReference type="iPTMnet" id="Q9CZ42"/>
<dbReference type="PhosphoSitePlus" id="Q9CZ42"/>
<dbReference type="SwissPalm" id="Q9CZ42"/>
<dbReference type="jPOST" id="Q9CZ42"/>
<dbReference type="PaxDb" id="10090-ENSMUSP00000033901"/>
<dbReference type="PeptideAtlas" id="Q9CZ42"/>
<dbReference type="ProteomicsDB" id="252976">
    <molecule id="Q9CZ42-1"/>
</dbReference>
<dbReference type="ProteomicsDB" id="252977">
    <molecule id="Q9CZ42-2"/>
</dbReference>
<dbReference type="ProteomicsDB" id="252978">
    <molecule id="Q9CZ42-3"/>
</dbReference>
<dbReference type="Pumba" id="Q9CZ42"/>
<dbReference type="GeneID" id="69225"/>
<dbReference type="KEGG" id="mmu:69225"/>
<dbReference type="AGR" id="MGI:1913353"/>
<dbReference type="CTD" id="55739"/>
<dbReference type="MGI" id="MGI:1913353">
    <property type="gene designation" value="Naxd"/>
</dbReference>
<dbReference type="eggNOG" id="KOG3974">
    <property type="taxonomic scope" value="Eukaryota"/>
</dbReference>
<dbReference type="InParanoid" id="Q9CZ42"/>
<dbReference type="OrthoDB" id="8110916at2759"/>
<dbReference type="PhylomeDB" id="Q9CZ42"/>
<dbReference type="BRENDA" id="4.2.1.93">
    <property type="organism ID" value="3474"/>
</dbReference>
<dbReference type="Reactome" id="R-MMU-197264">
    <property type="pathway name" value="Nicotinamide salvaging"/>
</dbReference>
<dbReference type="SABIO-RK" id="Q9CZ42"/>
<dbReference type="BioGRID-ORCS" id="69225">
    <property type="hits" value="6 hits in 76 CRISPR screens"/>
</dbReference>
<dbReference type="ChiTaRS" id="Carkd">
    <property type="organism name" value="mouse"/>
</dbReference>
<dbReference type="PRO" id="PR:Q9CZ42"/>
<dbReference type="Proteomes" id="UP000000589">
    <property type="component" value="Unplaced"/>
</dbReference>
<dbReference type="RNAct" id="Q9CZ42">
    <property type="molecule type" value="protein"/>
</dbReference>
<dbReference type="GO" id="GO:0005829">
    <property type="term" value="C:cytosol"/>
    <property type="evidence" value="ECO:0000314"/>
    <property type="project" value="FlyBase"/>
</dbReference>
<dbReference type="GO" id="GO:0005783">
    <property type="term" value="C:endoplasmic reticulum"/>
    <property type="evidence" value="ECO:0000314"/>
    <property type="project" value="FlyBase"/>
</dbReference>
<dbReference type="GO" id="GO:0005739">
    <property type="term" value="C:mitochondrion"/>
    <property type="evidence" value="ECO:0007005"/>
    <property type="project" value="MGI"/>
</dbReference>
<dbReference type="GO" id="GO:0005524">
    <property type="term" value="F:ATP binding"/>
    <property type="evidence" value="ECO:0007669"/>
    <property type="project" value="UniProtKB-KW"/>
</dbReference>
<dbReference type="GO" id="GO:0047453">
    <property type="term" value="F:ATP-dependent NAD(P)H-hydrate dehydratase activity"/>
    <property type="evidence" value="ECO:0000266"/>
    <property type="project" value="MGI"/>
</dbReference>
<dbReference type="GO" id="GO:0046496">
    <property type="term" value="P:nicotinamide nucleotide metabolic process"/>
    <property type="evidence" value="ECO:0007669"/>
    <property type="project" value="UniProtKB-UniRule"/>
</dbReference>
<dbReference type="CDD" id="cd01171">
    <property type="entry name" value="YXKO-related"/>
    <property type="match status" value="1"/>
</dbReference>
<dbReference type="FunFam" id="3.40.1190.20:FF:000013">
    <property type="entry name" value="ATP-dependent (S)-NAD(P)H-hydrate dehydratase"/>
    <property type="match status" value="1"/>
</dbReference>
<dbReference type="Gene3D" id="3.40.1190.20">
    <property type="match status" value="1"/>
</dbReference>
<dbReference type="HAMAP" id="MF_01965">
    <property type="entry name" value="NADHX_dehydratase"/>
    <property type="match status" value="1"/>
</dbReference>
<dbReference type="InterPro" id="IPR000631">
    <property type="entry name" value="CARKD"/>
</dbReference>
<dbReference type="InterPro" id="IPR029056">
    <property type="entry name" value="Ribokinase-like"/>
</dbReference>
<dbReference type="NCBIfam" id="TIGR00196">
    <property type="entry name" value="yjeF_cterm"/>
    <property type="match status" value="1"/>
</dbReference>
<dbReference type="PANTHER" id="PTHR12592:SF0">
    <property type="entry name" value="ATP-DEPENDENT (S)-NAD(P)H-HYDRATE DEHYDRATASE"/>
    <property type="match status" value="1"/>
</dbReference>
<dbReference type="PANTHER" id="PTHR12592">
    <property type="entry name" value="ATP-DEPENDENT (S)-NAD(P)H-HYDRATE DEHYDRATASE FAMILY MEMBER"/>
    <property type="match status" value="1"/>
</dbReference>
<dbReference type="Pfam" id="PF01256">
    <property type="entry name" value="Carb_kinase"/>
    <property type="match status" value="1"/>
</dbReference>
<dbReference type="SUPFAM" id="SSF53613">
    <property type="entry name" value="Ribokinase-like"/>
    <property type="match status" value="1"/>
</dbReference>
<dbReference type="PROSITE" id="PS51383">
    <property type="entry name" value="YJEF_C_3"/>
    <property type="match status" value="1"/>
</dbReference>
<gene>
    <name evidence="1" type="primary">Naxd</name>
    <name type="synonym">Carkd</name>
</gene>